<proteinExistence type="evidence at protein level"/>
<comment type="function">
    <text evidence="10">Regulates the mitochondrial network by promoting mitochondrial fission.</text>
</comment>
<comment type="subunit">
    <text evidence="11">Homodimer.</text>
</comment>
<comment type="interaction">
    <interactant intactId="EBI-11110431">
        <id>Q8TB36</id>
    </interactant>
    <interactant intactId="EBI-10308705">
        <id>Q9H7C9</id>
        <label>AAMDC</label>
    </interactant>
    <organismsDiffer>false</organismsDiffer>
    <experiments>3</experiments>
</comment>
<comment type="interaction">
    <interactant intactId="EBI-11110431">
        <id>Q8TB36</id>
    </interactant>
    <interactant intactId="EBI-348517">
        <id>O95870</id>
        <label>ABHD16A</label>
    </interactant>
    <organismsDiffer>false</organismsDiffer>
    <experiments>3</experiments>
</comment>
<comment type="interaction">
    <interactant intactId="EBI-11110431">
        <id>Q8TB36</id>
    </interactant>
    <interactant intactId="EBI-715495">
        <id>P05090</id>
        <label>APOD</label>
    </interactant>
    <organismsDiffer>false</organismsDiffer>
    <experiments>3</experiments>
</comment>
<comment type="interaction">
    <interactant intactId="EBI-11110431">
        <id>Q8TB36</id>
    </interactant>
    <interactant intactId="EBI-946046">
        <id>P54252</id>
        <label>ATXN3</label>
    </interactant>
    <organismsDiffer>false</organismsDiffer>
    <experiments>3</experiments>
</comment>
<comment type="interaction">
    <interactant intactId="EBI-11110431">
        <id>Q8TB36</id>
    </interactant>
    <interactant intactId="EBI-9092016">
        <id>Q9UQB8-6</id>
        <label>BAIAP2</label>
    </interactant>
    <organismsDiffer>false</organismsDiffer>
    <experiments>3</experiments>
</comment>
<comment type="interaction">
    <interactant intactId="EBI-11110431">
        <id>Q8TB36</id>
    </interactant>
    <interactant intactId="EBI-518823">
        <id>O15392</id>
        <label>BIRC5</label>
    </interactant>
    <organismsDiffer>false</organismsDiffer>
    <experiments>3</experiments>
</comment>
<comment type="interaction">
    <interactant intactId="EBI-11110431">
        <id>Q8TB36</id>
    </interactant>
    <interactant intactId="EBI-7105206">
        <id>Q9UMX3</id>
        <label>BOK</label>
    </interactant>
    <organismsDiffer>false</organismsDiffer>
    <experiments>3</experiments>
</comment>
<comment type="interaction">
    <interactant intactId="EBI-11110431">
        <id>Q8TB36</id>
    </interactant>
    <interactant intactId="EBI-747776">
        <id>Q53EZ4</id>
        <label>CEP55</label>
    </interactant>
    <organismsDiffer>false</organismsDiffer>
    <experiments>3</experiments>
</comment>
<comment type="interaction">
    <interactant intactId="EBI-11110431">
        <id>Q8TB36</id>
    </interactant>
    <interactant intactId="EBI-4402346">
        <id>P51798</id>
        <label>CLCN7</label>
    </interactant>
    <organismsDiffer>false</organismsDiffer>
    <experiments>3</experiments>
</comment>
<comment type="interaction">
    <interactant intactId="EBI-11110431">
        <id>Q8TB36</id>
    </interactant>
    <interactant intactId="EBI-1056029">
        <id>Q16740</id>
        <label>CLPP</label>
    </interactant>
    <organismsDiffer>false</organismsDiffer>
    <experiments>3</experiments>
</comment>
<comment type="interaction">
    <interactant intactId="EBI-11110431">
        <id>Q8TB36</id>
    </interactant>
    <interactant intactId="EBI-25830216">
        <id>Q9NR90-2</id>
        <label>DAZ3</label>
    </interactant>
    <organismsDiffer>false</organismsDiffer>
    <experiments>3</experiments>
</comment>
<comment type="interaction">
    <interactant intactId="EBI-11110431">
        <id>Q8TB36</id>
    </interactant>
    <interactant intactId="EBI-12135455">
        <id>Q96PD2-2</id>
        <label>DCBLD2</label>
    </interactant>
    <organismsDiffer>false</organismsDiffer>
    <experiments>5</experiments>
</comment>
<comment type="interaction">
    <interactant intactId="EBI-11110431">
        <id>Q8TB36</id>
    </interactant>
    <interactant intactId="EBI-347658">
        <id>Q9UHI6</id>
        <label>DDX20</label>
    </interactant>
    <organismsDiffer>false</organismsDiffer>
    <experiments>3</experiments>
</comment>
<comment type="interaction">
    <interactant intactId="EBI-11110431">
        <id>Q8TB36</id>
    </interactant>
    <interactant intactId="EBI-6448852">
        <id>Q9UI08-2</id>
        <label>EVL</label>
    </interactant>
    <organismsDiffer>false</organismsDiffer>
    <experiments>3</experiments>
</comment>
<comment type="interaction">
    <interactant intactId="EBI-11110431">
        <id>Q8TB36</id>
    </interactant>
    <interactant intactId="EBI-2686288">
        <id>Q8IWE2</id>
        <label>FAM114A1</label>
    </interactant>
    <organismsDiffer>false</organismsDiffer>
    <experiments>3</experiments>
</comment>
<comment type="interaction">
    <interactant intactId="EBI-11110431">
        <id>Q8TB36</id>
    </interactant>
    <interactant intactId="EBI-10253815">
        <id>Q6PIV2</id>
        <label>FOXR1</label>
    </interactant>
    <organismsDiffer>false</organismsDiffer>
    <experiments>3</experiments>
</comment>
<comment type="interaction">
    <interactant intactId="EBI-11110431">
        <id>Q8TB36</id>
    </interactant>
    <interactant intactId="EBI-3923226">
        <id>P09017</id>
        <label>HOXC4</label>
    </interactant>
    <organismsDiffer>false</organismsDiffer>
    <experiments>3</experiments>
</comment>
<comment type="interaction">
    <interactant intactId="EBI-11110431">
        <id>Q8TB36</id>
    </interactant>
    <interactant intactId="EBI-21911304">
        <id>Q6DN90-2</id>
        <label>IQSEC1</label>
    </interactant>
    <organismsDiffer>false</organismsDiffer>
    <experiments>3</experiments>
</comment>
<comment type="interaction">
    <interactant intactId="EBI-11110431">
        <id>Q8TB36</id>
    </interactant>
    <interactant intactId="EBI-10220600">
        <id>Q8NA54</id>
        <label>IQUB</label>
    </interactant>
    <organismsDiffer>false</organismsDiffer>
    <experiments>3</experiments>
</comment>
<comment type="interaction">
    <interactant intactId="EBI-11110431">
        <id>Q8TB36</id>
    </interactant>
    <interactant intactId="EBI-10261141">
        <id>Q8IUC2</id>
        <label>KRTAP8-1</label>
    </interactant>
    <organismsDiffer>false</organismsDiffer>
    <experiments>3</experiments>
</comment>
<comment type="interaction">
    <interactant intactId="EBI-11110431">
        <id>Q8TB36</id>
    </interactant>
    <interactant intactId="EBI-476263">
        <id>Q99683</id>
        <label>MAP3K5</label>
    </interactant>
    <organismsDiffer>false</organismsDiffer>
    <experiments>3</experiments>
</comment>
<comment type="interaction">
    <interactant intactId="EBI-11110431">
        <id>Q8TB36</id>
    </interactant>
    <interactant intactId="EBI-4397720">
        <id>Q8TDB4</id>
        <label>MGARP</label>
    </interactant>
    <organismsDiffer>false</organismsDiffer>
    <experiments>3</experiments>
</comment>
<comment type="interaction">
    <interactant intactId="EBI-11110431">
        <id>Q8TB36</id>
    </interactant>
    <interactant intactId="EBI-995714">
        <id>Q9Y605</id>
        <label>MRFAP1</label>
    </interactant>
    <organismsDiffer>false</organismsDiffer>
    <experiments>3</experiments>
</comment>
<comment type="interaction">
    <interactant intactId="EBI-11110431">
        <id>Q8TB36</id>
    </interactant>
    <interactant intactId="EBI-25844576">
        <id>O43196-2</id>
        <label>MSH5</label>
    </interactant>
    <organismsDiffer>false</organismsDiffer>
    <experiments>3</experiments>
</comment>
<comment type="interaction">
    <interactant intactId="EBI-11110431">
        <id>Q8TB36</id>
    </interactant>
    <interactant intactId="EBI-9091423">
        <id>Q96CV9-2</id>
        <label>OPTN</label>
    </interactant>
    <organismsDiffer>false</organismsDiffer>
    <experiments>3</experiments>
</comment>
<comment type="interaction">
    <interactant intactId="EBI-11110431">
        <id>Q8TB36</id>
    </interactant>
    <interactant intactId="EBI-9090282">
        <id>P27986-2</id>
        <label>PIK3R1</label>
    </interactant>
    <organismsDiffer>false</organismsDiffer>
    <experiments>3</experiments>
</comment>
<comment type="interaction">
    <interactant intactId="EBI-11110431">
        <id>Q8TB36</id>
    </interactant>
    <interactant intactId="EBI-8652812">
        <id>P54315</id>
        <label>PNLIPRP1</label>
    </interactant>
    <organismsDiffer>false</organismsDiffer>
    <experiments>3</experiments>
</comment>
<comment type="interaction">
    <interactant intactId="EBI-11110431">
        <id>Q8TB36</id>
    </interactant>
    <interactant intactId="EBI-25837959">
        <id>Q9BY12-3</id>
        <label>SCAPER</label>
    </interactant>
    <organismsDiffer>false</organismsDiffer>
    <experiments>3</experiments>
</comment>
<comment type="interaction">
    <interactant intactId="EBI-11110431">
        <id>Q8TB36</id>
    </interactant>
    <interactant intactId="EBI-358545">
        <id>Q9GZS3</id>
        <label>SKIC8</label>
    </interactant>
    <organismsDiffer>false</organismsDiffer>
    <experiments>3</experiments>
</comment>
<comment type="interaction">
    <interactant intactId="EBI-11110431">
        <id>Q8TB36</id>
    </interactant>
    <interactant intactId="EBI-395447">
        <id>Q16637-3</id>
        <label>SMN2</label>
    </interactant>
    <organismsDiffer>false</organismsDiffer>
    <experiments>3</experiments>
</comment>
<comment type="interaction">
    <interactant intactId="EBI-11110431">
        <id>Q8TB36</id>
    </interactant>
    <interactant intactId="EBI-1046690">
        <id>O60749</id>
        <label>SNX2</label>
    </interactant>
    <organismsDiffer>false</organismsDiffer>
    <experiments>3</experiments>
</comment>
<comment type="interaction">
    <interactant intactId="EBI-11110431">
        <id>Q8TB36</id>
    </interactant>
    <interactant intactId="EBI-25845337">
        <id>Q05C28</id>
        <label>SPACA3</label>
    </interactant>
    <organismsDiffer>false</organismsDiffer>
    <experiments>3</experiments>
</comment>
<comment type="interaction">
    <interactant intactId="EBI-11110431">
        <id>Q8TB36</id>
    </interactant>
    <interactant intactId="EBI-10696971">
        <id>Q7Z6I5</id>
        <label>SPATA12</label>
    </interactant>
    <organismsDiffer>false</organismsDiffer>
    <experiments>3</experiments>
</comment>
<comment type="interaction">
    <interactant intactId="EBI-11110431">
        <id>Q8TB36</id>
    </interactant>
    <interactant intactId="EBI-17217258">
        <id>Q96DR4</id>
        <label>STARD4</label>
    </interactant>
    <organismsDiffer>false</organismsDiffer>
    <experiments>3</experiments>
</comment>
<comment type="interaction">
    <interactant intactId="EBI-11110431">
        <id>Q8TB36</id>
    </interactant>
    <interactant intactId="EBI-1056740">
        <id>P37802</id>
        <label>TAGLN2</label>
    </interactant>
    <organismsDiffer>false</organismsDiffer>
    <experiments>3</experiments>
</comment>
<comment type="interaction">
    <interactant intactId="EBI-11110431">
        <id>Q8TB36</id>
    </interactant>
    <interactant intactId="EBI-8638294">
        <id>Q9NUH8</id>
        <label>TMEM14B</label>
    </interactant>
    <organismsDiffer>false</organismsDiffer>
    <experiments>3</experiments>
</comment>
<comment type="interaction">
    <interactant intactId="EBI-11110431">
        <id>Q8TB36</id>
    </interactant>
    <interactant intactId="EBI-10173151">
        <id>A2RU14</id>
        <label>TMEM218</label>
    </interactant>
    <organismsDiffer>false</organismsDiffer>
    <experiments>3</experiments>
</comment>
<comment type="interaction">
    <interactant intactId="EBI-11110431">
        <id>Q8TB36</id>
    </interactant>
    <interactant intactId="EBI-2850578">
        <id>Q8NEZ2</id>
        <label>VPS37A</label>
    </interactant>
    <organismsDiffer>false</organismsDiffer>
    <experiments>3</experiments>
</comment>
<comment type="interaction">
    <interactant intactId="EBI-11110431">
        <id>Q8TB36</id>
    </interactant>
    <interactant intactId="EBI-524753">
        <id>Q8IUH5</id>
        <label>ZDHHC17</label>
    </interactant>
    <organismsDiffer>false</organismsDiffer>
    <experiments>3</experiments>
</comment>
<comment type="interaction">
    <interactant intactId="EBI-11110431">
        <id>Q8TB36</id>
    </interactant>
    <interactant intactId="EBI-25845021">
        <id>Q14966-2</id>
        <label>ZNF638</label>
    </interactant>
    <organismsDiffer>false</organismsDiffer>
    <experiments>3</experiments>
</comment>
<comment type="interaction">
    <interactant intactId="EBI-11110431">
        <id>Q8TB36</id>
    </interactant>
    <interactant intactId="EBI-25845217">
        <id>Q5TEC3</id>
        <label>ZNF697</label>
    </interactant>
    <organismsDiffer>false</organismsDiffer>
    <experiments>3</experiments>
</comment>
<comment type="subcellular location">
    <subcellularLocation>
        <location evidence="9 10 11">Mitochondrion outer membrane</location>
        <topology evidence="10">Multi-pass membrane protein</topology>
    </subcellularLocation>
    <subcellularLocation>
        <location evidence="1">Cytoplasm</location>
    </subcellularLocation>
</comment>
<comment type="alternative products">
    <event type="alternative splicing"/>
    <isoform>
        <id>Q8TB36-1</id>
        <name>1</name>
        <sequence type="displayed"/>
    </isoform>
    <isoform>
        <id>Q8TB36-2</id>
        <name>2</name>
        <sequence type="described" ref="VSP_038393"/>
    </isoform>
</comment>
<comment type="tissue specificity">
    <text evidence="4 10">Highly expressed in whole brain and spinal cord. Predominant expression in central tissues of the nervous system not only in neurons but also in Schwann cells.</text>
</comment>
<comment type="PTM">
    <text evidence="15">Ubiquitinated by PRKN during mitophagy, leading to its degradation and enhancement of mitophagy. Deubiquitinated by USP30.</text>
</comment>
<comment type="disease" evidence="3 7 9 10">
    <disease id="DI-00285">
        <name>Charcot-Marie-Tooth disease, demyelinating, type 4A</name>
        <acronym>CMT4A</acronym>
        <description>A recessive demyelinating form of Charcot-Marie-Tooth disease, a disorder of the peripheral nervous system, characterized by progressive weakness and atrophy, initially of the peroneal muscles and later of the distal muscles of the arms. Charcot-Marie-Tooth disease is classified in two main groups on the basis of electrophysiologic properties and histopathology: primary peripheral demyelinating neuropathies (designated CMT1 when they are dominantly inherited) and primary peripheral axonal neuropathies (CMT2). Demyelinating neuropathies are characterized by severely reduced nerve conduction velocities (less than 38 m/sec), segmental demyelination and remyelination with onion bulb formations on nerve biopsy, slowly progressive distal muscle atrophy and weakness, absent deep tendon reflexes, and hollow feet. By convention autosomal recessive forms of demyelinating Charcot-Marie-Tooth disease are designated CMT4. CMT4A is a severe form characterized by early age of onset and rapid progression leading to inability to walk in late childhood or adolescence.</description>
        <dbReference type="MIM" id="214400"/>
    </disease>
    <text>The disease is caused by variants affecting the gene represented in this entry.</text>
</comment>
<comment type="disease" evidence="8 10">
    <disease id="DI-00263">
        <name>Charcot-Marie-Tooth disease, axonal, with vocal cord paresis, autosomal recessive</name>
        <acronym>CMT2RV</acronym>
        <description>A form of Charcot-Marie-Tooth disease characterized by the association of axonal neuropathy with vocal cord paresis. Charcot-Marie-Tooth disease is a disorder of the peripheral nervous system, characterized by progressive weakness and atrophy, initially of the peroneal muscles and later of the distal muscles of the arms.</description>
        <dbReference type="MIM" id="607706"/>
    </disease>
    <text>The disease is caused by variants affecting the gene represented in this entry.</text>
</comment>
<comment type="disease" evidence="9 12 13 16 17">
    <disease id="DI-00283">
        <name>Charcot-Marie-Tooth disease, axonal, type 2K</name>
        <acronym>CMT2K</acronym>
        <description>An axonal form of Charcot-Marie-Tooth disease, a disorder of the peripheral nervous system, characterized by progressive weakness and atrophy, initially of the peroneal muscles and later of the distal muscles of the arms. Charcot-Marie-Tooth disease is classified in two main groups on the basis of electrophysiologic properties and histopathology: primary peripheral demyelinating neuropathies (designated CMT1 when they are dominantly inherited) and primary peripheral axonal neuropathies (CMT2). Neuropathies of the CMT2 group are characterized by signs of axonal degeneration in the absence of obvious myelin alterations, normal or slightly reduced nerve conduction velocities, and progressive distal muscle weakness and atrophy. Charcot-Marie-Tooth disease type 2K onset is in early childhood (younger than 3 years). This phenotype is characterized by foot deformities, kyphoscoliosis, distal limb muscle weakness and atrophy, areflexia, and diminished sensation in the lower limbs. Weakness in the upper limbs is observed in the first decade, with clawing of the fingers. Inheritance can be autosomal dominant or recessive.</description>
        <dbReference type="MIM" id="607831"/>
    </disease>
    <text>The disease is caused by variants affecting the gene represented in this entry.</text>
</comment>
<comment type="disease" evidence="5 6 9 10">
    <disease id="DI-00267">
        <name>Charcot-Marie-Tooth disease, recessive intermediate A</name>
        <acronym>CMTRIA</acronym>
        <description>A form of Charcot-Marie-Tooth disease, a disorder of the peripheral nervous system, characterized by progressive weakness and atrophy, initially of the peroneal muscles and later of the distal muscles of the arms. Recessive intermediate forms of Charcot-Marie-Tooth disease are characterized by clinical and pathologic features intermediate between demyelinating and axonal peripheral neuropathies, and motor median nerve conduction velocities ranging from 25 to 45 m/sec.</description>
        <dbReference type="MIM" id="608340"/>
    </disease>
    <text>The disease is caused by variants affecting the gene represented in this entry.</text>
</comment>
<comment type="similarity">
    <text evidence="19">Belongs to the GST superfamily.</text>
</comment>
<comment type="caution">
    <text evidence="19">While belonging to the GST superfamily, it lacks glutathione transferase activity.</text>
</comment>
<comment type="online information" name="Inherited peripheral neuropathies mutation db">
    <link uri="https://uantwerpen.vib.be/CMTMutations"/>
</comment>
<dbReference type="EMBL" id="Y17849">
    <property type="protein sequence ID" value="CAA76892.1"/>
    <property type="molecule type" value="mRNA"/>
</dbReference>
<dbReference type="EMBL" id="AB551556">
    <property type="protein sequence ID" value="BAJ65577.1"/>
    <property type="molecule type" value="mRNA"/>
</dbReference>
<dbReference type="EMBL" id="AB551557">
    <property type="protein sequence ID" value="BAJ65578.1"/>
    <property type="molecule type" value="mRNA"/>
</dbReference>
<dbReference type="EMBL" id="AK292572">
    <property type="protein sequence ID" value="BAF85261.1"/>
    <property type="molecule type" value="mRNA"/>
</dbReference>
<dbReference type="EMBL" id="AC103952">
    <property type="status" value="NOT_ANNOTATED_CDS"/>
    <property type="molecule type" value="Genomic_DNA"/>
</dbReference>
<dbReference type="EMBL" id="BC024939">
    <property type="protein sequence ID" value="AAH24939.1"/>
    <property type="molecule type" value="mRNA"/>
</dbReference>
<dbReference type="CCDS" id="CCDS34911.1">
    <molecule id="Q8TB36-1"/>
</dbReference>
<dbReference type="CCDS" id="CCDS47877.1">
    <molecule id="Q8TB36-2"/>
</dbReference>
<dbReference type="RefSeq" id="NP_001035808.1">
    <molecule id="Q8TB36-2"/>
    <property type="nucleotide sequence ID" value="NM_001040875.4"/>
</dbReference>
<dbReference type="RefSeq" id="NP_061845.2">
    <molecule id="Q8TB36-1"/>
    <property type="nucleotide sequence ID" value="NM_018972.4"/>
</dbReference>
<dbReference type="PDB" id="7AIA">
    <property type="method" value="X-ray"/>
    <property type="resolution" value="2.20 A"/>
    <property type="chains" value="AAA/BBB=23-302"/>
</dbReference>
<dbReference type="PDB" id="7ALM">
    <property type="method" value="X-ray"/>
    <property type="resolution" value="2.80 A"/>
    <property type="chains" value="A/B=23-302"/>
</dbReference>
<dbReference type="PDB" id="7B2G">
    <property type="method" value="X-ray"/>
    <property type="resolution" value="3.00 A"/>
    <property type="chains" value="A=1-302"/>
</dbReference>
<dbReference type="PDB" id="7Q6J">
    <property type="method" value="X-ray"/>
    <property type="resolution" value="2.20 A"/>
    <property type="chains" value="A/B=23-302"/>
</dbReference>
<dbReference type="PDB" id="7Q6K">
    <property type="method" value="X-ray"/>
    <property type="resolution" value="3.41 A"/>
    <property type="chains" value="A=23-302"/>
</dbReference>
<dbReference type="PDB" id="7YWD">
    <property type="method" value="X-ray"/>
    <property type="resolution" value="3.20 A"/>
    <property type="chains" value="A/B/C/D=23-294"/>
</dbReference>
<dbReference type="PDB" id="8A4J">
    <property type="method" value="X-ray"/>
    <property type="resolution" value="2.68 A"/>
    <property type="chains" value="A/B=23-302"/>
</dbReference>
<dbReference type="PDB" id="8A4K">
    <property type="method" value="X-ray"/>
    <property type="resolution" value="1.95 A"/>
    <property type="chains" value="A/B=23-302"/>
</dbReference>
<dbReference type="PDBsum" id="7AIA"/>
<dbReference type="PDBsum" id="7ALM"/>
<dbReference type="PDBsum" id="7B2G"/>
<dbReference type="PDBsum" id="7Q6J"/>
<dbReference type="PDBsum" id="7Q6K"/>
<dbReference type="PDBsum" id="7YWD"/>
<dbReference type="PDBsum" id="8A4J"/>
<dbReference type="PDBsum" id="8A4K"/>
<dbReference type="SASBDB" id="Q8TB36"/>
<dbReference type="SMR" id="Q8TB36"/>
<dbReference type="BioGRID" id="119934">
    <property type="interactions" value="51"/>
</dbReference>
<dbReference type="FunCoup" id="Q8TB36">
    <property type="interactions" value="1540"/>
</dbReference>
<dbReference type="IntAct" id="Q8TB36">
    <property type="interactions" value="54"/>
</dbReference>
<dbReference type="MINT" id="Q8TB36"/>
<dbReference type="STRING" id="9606.ENSP00000220822"/>
<dbReference type="iPTMnet" id="Q8TB36"/>
<dbReference type="PhosphoSitePlus" id="Q8TB36"/>
<dbReference type="SwissPalm" id="Q8TB36"/>
<dbReference type="BioMuta" id="GDAP1"/>
<dbReference type="DMDM" id="269849682"/>
<dbReference type="jPOST" id="Q8TB36"/>
<dbReference type="MassIVE" id="Q8TB36"/>
<dbReference type="PaxDb" id="9606-ENSP00000220822"/>
<dbReference type="PeptideAtlas" id="Q8TB36"/>
<dbReference type="ProteomicsDB" id="73956">
    <molecule id="Q8TB36-1"/>
</dbReference>
<dbReference type="ProteomicsDB" id="73957">
    <molecule id="Q8TB36-2"/>
</dbReference>
<dbReference type="Pumba" id="Q8TB36"/>
<dbReference type="Antibodypedia" id="2988">
    <property type="antibodies" value="124 antibodies from 23 providers"/>
</dbReference>
<dbReference type="DNASU" id="54332"/>
<dbReference type="Ensembl" id="ENST00000220822.12">
    <molecule id="Q8TB36-1"/>
    <property type="protein sequence ID" value="ENSP00000220822.7"/>
    <property type="gene ID" value="ENSG00000104381.14"/>
</dbReference>
<dbReference type="Ensembl" id="ENST00000674865.1">
    <molecule id="Q8TB36-2"/>
    <property type="protein sequence ID" value="ENSP00000502437.1"/>
    <property type="gene ID" value="ENSG00000104381.14"/>
</dbReference>
<dbReference type="Ensembl" id="ENST00000675944.1">
    <molecule id="Q8TB36-2"/>
    <property type="protein sequence ID" value="ENSP00000502673.1"/>
    <property type="gene ID" value="ENSG00000104381.14"/>
</dbReference>
<dbReference type="GeneID" id="54332"/>
<dbReference type="KEGG" id="hsa:54332"/>
<dbReference type="MANE-Select" id="ENST00000220822.12">
    <property type="protein sequence ID" value="ENSP00000220822.7"/>
    <property type="RefSeq nucleotide sequence ID" value="NM_018972.4"/>
    <property type="RefSeq protein sequence ID" value="NP_061845.2"/>
</dbReference>
<dbReference type="UCSC" id="uc003yah.4">
    <molecule id="Q8TB36-1"/>
    <property type="organism name" value="human"/>
</dbReference>
<dbReference type="AGR" id="HGNC:15968"/>
<dbReference type="CTD" id="54332"/>
<dbReference type="DisGeNET" id="54332"/>
<dbReference type="GeneCards" id="GDAP1"/>
<dbReference type="GeneReviews" id="GDAP1"/>
<dbReference type="HGNC" id="HGNC:15968">
    <property type="gene designation" value="GDAP1"/>
</dbReference>
<dbReference type="HPA" id="ENSG00000104381">
    <property type="expression patterns" value="Tissue enhanced (brain)"/>
</dbReference>
<dbReference type="MalaCards" id="GDAP1"/>
<dbReference type="MIM" id="214400">
    <property type="type" value="phenotype"/>
</dbReference>
<dbReference type="MIM" id="606598">
    <property type="type" value="gene"/>
</dbReference>
<dbReference type="MIM" id="607706">
    <property type="type" value="phenotype"/>
</dbReference>
<dbReference type="MIM" id="607831">
    <property type="type" value="phenotype"/>
</dbReference>
<dbReference type="MIM" id="608340">
    <property type="type" value="phenotype"/>
</dbReference>
<dbReference type="neXtProt" id="NX_Q8TB36"/>
<dbReference type="OpenTargets" id="ENSG00000104381"/>
<dbReference type="Orphanet" id="99944">
    <property type="disease" value="Autosomal dominant Charcot-Marie-Tooth disease type 2K"/>
</dbReference>
<dbReference type="Orphanet" id="101097">
    <property type="disease" value="Autosomal recessive Charcot-Marie-Tooth disease with hoarseness"/>
</dbReference>
<dbReference type="Orphanet" id="217055">
    <property type="disease" value="Autosomal recessive intermediate Charcot-Marie-Tooth disease type A"/>
</dbReference>
<dbReference type="Orphanet" id="101102">
    <property type="disease" value="Charcot-Marie-Tooth disease type 2H"/>
</dbReference>
<dbReference type="Orphanet" id="99948">
    <property type="disease" value="Charcot-Marie-Tooth disease type 4A"/>
</dbReference>
<dbReference type="PharmGKB" id="PA28626"/>
<dbReference type="VEuPathDB" id="HostDB:ENSG00000104381"/>
<dbReference type="eggNOG" id="KOG4420">
    <property type="taxonomic scope" value="Eukaryota"/>
</dbReference>
<dbReference type="GeneTree" id="ENSGT00940000159124"/>
<dbReference type="HOGENOM" id="CLU_049129_0_0_1"/>
<dbReference type="InParanoid" id="Q8TB36"/>
<dbReference type="OMA" id="LHCEEYD"/>
<dbReference type="OrthoDB" id="249703at2759"/>
<dbReference type="PAN-GO" id="Q8TB36">
    <property type="GO annotations" value="4 GO annotations based on evolutionary models"/>
</dbReference>
<dbReference type="PhylomeDB" id="Q8TB36"/>
<dbReference type="TreeFam" id="TF327072"/>
<dbReference type="PathwayCommons" id="Q8TB36"/>
<dbReference type="Reactome" id="R-HSA-9603798">
    <property type="pathway name" value="Class I peroxisomal membrane protein import"/>
</dbReference>
<dbReference type="SignaLink" id="Q8TB36"/>
<dbReference type="SIGNOR" id="Q8TB36"/>
<dbReference type="BioGRID-ORCS" id="54332">
    <property type="hits" value="11 hits in 1152 CRISPR screens"/>
</dbReference>
<dbReference type="CD-CODE" id="FB4E32DD">
    <property type="entry name" value="Presynaptic clusters and postsynaptic densities"/>
</dbReference>
<dbReference type="ChiTaRS" id="GDAP1">
    <property type="organism name" value="human"/>
</dbReference>
<dbReference type="GeneWiki" id="GDAP1"/>
<dbReference type="GenomeRNAi" id="54332"/>
<dbReference type="Pharos" id="Q8TB36">
    <property type="development level" value="Tbio"/>
</dbReference>
<dbReference type="PRO" id="PR:Q8TB36"/>
<dbReference type="Proteomes" id="UP000005640">
    <property type="component" value="Chromosome 8"/>
</dbReference>
<dbReference type="RNAct" id="Q8TB36">
    <property type="molecule type" value="protein"/>
</dbReference>
<dbReference type="Bgee" id="ENSG00000104381">
    <property type="expression patterns" value="Expressed in endothelial cell and 159 other cell types or tissues"/>
</dbReference>
<dbReference type="ExpressionAtlas" id="Q8TB36">
    <property type="expression patterns" value="baseline and differential"/>
</dbReference>
<dbReference type="GO" id="GO:0005829">
    <property type="term" value="C:cytosol"/>
    <property type="evidence" value="ECO:0000314"/>
    <property type="project" value="HPA"/>
</dbReference>
<dbReference type="GO" id="GO:0016020">
    <property type="term" value="C:membrane"/>
    <property type="evidence" value="ECO:0007005"/>
    <property type="project" value="UniProtKB"/>
</dbReference>
<dbReference type="GO" id="GO:0005741">
    <property type="term" value="C:mitochondrial outer membrane"/>
    <property type="evidence" value="ECO:0000314"/>
    <property type="project" value="UniProtKB"/>
</dbReference>
<dbReference type="GO" id="GO:0005739">
    <property type="term" value="C:mitochondrion"/>
    <property type="evidence" value="ECO:0000314"/>
    <property type="project" value="HPA"/>
</dbReference>
<dbReference type="GO" id="GO:0005634">
    <property type="term" value="C:nucleus"/>
    <property type="evidence" value="ECO:0007005"/>
    <property type="project" value="UniProtKB"/>
</dbReference>
<dbReference type="GO" id="GO:0005778">
    <property type="term" value="C:peroxisomal membrane"/>
    <property type="evidence" value="ECO:0000304"/>
    <property type="project" value="Reactome"/>
</dbReference>
<dbReference type="GO" id="GO:0071305">
    <property type="term" value="P:cellular response to vitamin D"/>
    <property type="evidence" value="ECO:0007669"/>
    <property type="project" value="Ensembl"/>
</dbReference>
<dbReference type="GO" id="GO:0000266">
    <property type="term" value="P:mitochondrial fission"/>
    <property type="evidence" value="ECO:0000314"/>
    <property type="project" value="UniProtKB"/>
</dbReference>
<dbReference type="GO" id="GO:0008053">
    <property type="term" value="P:mitochondrial fusion"/>
    <property type="evidence" value="ECO:0000315"/>
    <property type="project" value="CACAO"/>
</dbReference>
<dbReference type="GO" id="GO:0006626">
    <property type="term" value="P:protein targeting to mitochondrion"/>
    <property type="evidence" value="ECO:0000315"/>
    <property type="project" value="UniProtKB"/>
</dbReference>
<dbReference type="GO" id="GO:0032526">
    <property type="term" value="P:response to retinoic acid"/>
    <property type="evidence" value="ECO:0007669"/>
    <property type="project" value="Ensembl"/>
</dbReference>
<dbReference type="CDD" id="cd10303">
    <property type="entry name" value="GST_C_GDAP1"/>
    <property type="match status" value="1"/>
</dbReference>
<dbReference type="CDD" id="cd03052">
    <property type="entry name" value="GST_N_GDAP1"/>
    <property type="match status" value="1"/>
</dbReference>
<dbReference type="FunFam" id="1.20.1050.10:FF:000022">
    <property type="entry name" value="ganglioside-induced differentiation-associated protein 1 isoform X1"/>
    <property type="match status" value="1"/>
</dbReference>
<dbReference type="FunFam" id="3.40.30.10:FF:000113">
    <property type="entry name" value="ganglioside-induced differentiation-associated protein 1 isoform X1"/>
    <property type="match status" value="1"/>
</dbReference>
<dbReference type="Gene3D" id="1.20.1050.10">
    <property type="match status" value="1"/>
</dbReference>
<dbReference type="Gene3D" id="3.40.30.10">
    <property type="entry name" value="Glutaredoxin"/>
    <property type="match status" value="1"/>
</dbReference>
<dbReference type="InterPro" id="IPR010987">
    <property type="entry name" value="Glutathione-S-Trfase_C-like"/>
</dbReference>
<dbReference type="InterPro" id="IPR036282">
    <property type="entry name" value="Glutathione-S-Trfase_C_sf"/>
</dbReference>
<dbReference type="InterPro" id="IPR040079">
    <property type="entry name" value="Glutathione_S-Trfase"/>
</dbReference>
<dbReference type="InterPro" id="IPR004045">
    <property type="entry name" value="Glutathione_S-Trfase_N"/>
</dbReference>
<dbReference type="InterPro" id="IPR034336">
    <property type="entry name" value="GST_C_GDAP1"/>
</dbReference>
<dbReference type="InterPro" id="IPR036249">
    <property type="entry name" value="Thioredoxin-like_sf"/>
</dbReference>
<dbReference type="PANTHER" id="PTHR44188:SF3">
    <property type="entry name" value="GANGLIOSIDE-INDUCED DIFFERENTIATION-ASSOCIATED PROTEIN 1"/>
    <property type="match status" value="1"/>
</dbReference>
<dbReference type="PANTHER" id="PTHR44188">
    <property type="entry name" value="GDAP1, ISOFORM A"/>
    <property type="match status" value="1"/>
</dbReference>
<dbReference type="Pfam" id="PF13410">
    <property type="entry name" value="GST_C_2"/>
    <property type="match status" value="1"/>
</dbReference>
<dbReference type="Pfam" id="PF13417">
    <property type="entry name" value="GST_N_3"/>
    <property type="match status" value="1"/>
</dbReference>
<dbReference type="SFLD" id="SFLDS00019">
    <property type="entry name" value="Glutathione_Transferase_(cytos"/>
    <property type="match status" value="1"/>
</dbReference>
<dbReference type="SFLD" id="SFLDG00358">
    <property type="entry name" value="Main_(cytGST)"/>
    <property type="match status" value="1"/>
</dbReference>
<dbReference type="SUPFAM" id="SSF47616">
    <property type="entry name" value="GST C-terminal domain-like"/>
    <property type="match status" value="1"/>
</dbReference>
<dbReference type="SUPFAM" id="SSF52833">
    <property type="entry name" value="Thioredoxin-like"/>
    <property type="match status" value="1"/>
</dbReference>
<dbReference type="PROSITE" id="PS50405">
    <property type="entry name" value="GST_CTER"/>
    <property type="match status" value="1"/>
</dbReference>
<dbReference type="PROSITE" id="PS50404">
    <property type="entry name" value="GST_NTER"/>
    <property type="match status" value="1"/>
</dbReference>
<protein>
    <recommendedName>
        <fullName>Ganglioside-induced differentiation-associated protein 1</fullName>
        <shortName>GDAP1</shortName>
    </recommendedName>
</protein>
<feature type="chain" id="PRO_0000186038" description="Ganglioside-induced differentiation-associated protein 1">
    <location>
        <begin position="1"/>
        <end position="358"/>
    </location>
</feature>
<feature type="transmembrane region" description="Helical" evidence="2">
    <location>
        <begin position="292"/>
        <end position="312"/>
    </location>
</feature>
<feature type="transmembrane region" description="Helical" evidence="2">
    <location>
        <begin position="320"/>
        <end position="340"/>
    </location>
</feature>
<feature type="domain" description="GST N-terminal">
    <location>
        <begin position="24"/>
        <end position="105"/>
    </location>
</feature>
<feature type="domain" description="GST C-terminal">
    <location>
        <begin position="153"/>
        <end position="309"/>
    </location>
</feature>
<feature type="region of interest" description="Required for mitochondrial localization">
    <location>
        <begin position="320"/>
        <end position="358"/>
    </location>
</feature>
<feature type="modified residue" description="N6-acetyllysine; alternate" evidence="20">
    <location>
        <position position="203"/>
    </location>
</feature>
<feature type="cross-link" description="Glycyl lysine isopeptide (Lys-Gly) (interchain with G-Cter in ubiquitin)" evidence="15">
    <location>
        <position position="50"/>
    </location>
</feature>
<feature type="cross-link" description="Glycyl lysine isopeptide (Lys-Gly) (interchain with G-Cter in ubiquitin)" evidence="15">
    <location>
        <position position="172"/>
    </location>
</feature>
<feature type="cross-link" description="Glycyl lysine isopeptide (Lys-Gly) (interchain with G-Cter in ubiquitin)" evidence="15">
    <location>
        <position position="173"/>
    </location>
</feature>
<feature type="cross-link" description="Glycyl lysine isopeptide (Lys-Gly) (interchain with G-Cter in ubiquitin)" evidence="15">
    <location>
        <position position="188"/>
    </location>
</feature>
<feature type="cross-link" description="Glycyl lysine isopeptide (Lys-Gly) (interchain with G-Cter in ubiquitin)" evidence="15">
    <location>
        <position position="190"/>
    </location>
</feature>
<feature type="cross-link" description="Glycyl lysine isopeptide (Lys-Gly) (interchain with G-Cter in ubiquitin); alternate" evidence="15">
    <location>
        <position position="203"/>
    </location>
</feature>
<feature type="cross-link" description="Glycyl lysine isopeptide (Lys-Gly) (interchain with G-Cter in ubiquitin)" evidence="15">
    <location>
        <position position="206"/>
    </location>
</feature>
<feature type="cross-link" description="Glycyl lysine isopeptide (Lys-Gly) (interchain with G-Cter in ubiquitin)" evidence="15">
    <location>
        <position position="207"/>
    </location>
</feature>
<feature type="cross-link" description="Glycyl lysine isopeptide (Lys-Gly) (interchain with G-Cter in ubiquitin)" evidence="15">
    <location>
        <position position="214"/>
    </location>
</feature>
<feature type="splice variant" id="VSP_038393" description="In isoform 2." evidence="18">
    <location>
        <begin position="1"/>
        <end position="68"/>
    </location>
</feature>
<feature type="sequence variant" id="VAR_073297" description="Found in a patient with hereditary motor neuropathy; uncertain significance; dbSNP:rs1586794314." evidence="14">
    <original>K</original>
    <variation>N</variation>
    <location>
        <position position="39"/>
    </location>
</feature>
<feature type="sequence variant" id="VAR_078265" description="In CMT2K; dominant form; dbSNP:rs104894078." evidence="16">
    <original>R</original>
    <variation>G</variation>
    <location>
        <position position="120"/>
    </location>
</feature>
<feature type="sequence variant" id="VAR_017184" description="In CMT4A; no effect on mitochondrial localization but impairment in the ability to induce mitochondrial fragmentation; dbSNP:rs1174933176." evidence="7 9 10">
    <original>R</original>
    <variation>Q</variation>
    <location>
        <position position="120"/>
    </location>
</feature>
<feature type="sequence variant" id="VAR_078266" description="In CMT2K; dominant form; no effect on mitochondrial localization; dbSNP:rs104894078." evidence="9 16 17">
    <original>R</original>
    <variation>W</variation>
    <location>
        <position position="120"/>
    </location>
</feature>
<feature type="sequence variant" id="VAR_078267" description="In CMT2K; dominant form;; dbSNP:rs397515442." evidence="16 17">
    <original>H</original>
    <variation>R</variation>
    <location>
        <position position="123"/>
    </location>
</feature>
<feature type="sequence variant" id="VAR_078268" description="In CMT2K; uncertain significance; dbSNP:rs879254005." evidence="17">
    <original>E</original>
    <variation>K</variation>
    <location>
        <position position="126"/>
    </location>
</feature>
<feature type="sequence variant" id="VAR_078269" description="In CMT2K; dominant form; dbSNP:rs397515441." evidence="17">
    <original>A</original>
    <variation>G</variation>
    <location>
        <position position="156"/>
    </location>
</feature>
<feature type="sequence variant" id="VAR_017185" description="In CMT4A; no effect on mitochondrial localization but abolishes mitochondrial fission; dbSNP:rs104894076." evidence="3 9 10">
    <original>R</original>
    <variation>H</variation>
    <location>
        <position position="161"/>
    </location>
</feature>
<feature type="sequence variant" id="VAR_078270" description="In CMT2K; uncertain significance; dbSNP:rs121908113." evidence="16">
    <original>Q</original>
    <variation>E</variation>
    <location>
        <position position="218"/>
    </location>
</feature>
<feature type="sequence variant" id="VAR_078271" description="In CMT2K; uncertain significance; dbSNP:rs267606842." evidence="16">
    <original>R</original>
    <variation>S</variation>
    <location>
        <position position="226"/>
    </location>
</feature>
<feature type="sequence variant" id="VAR_078272" description="In CMT2K; uncertain significance; dbSNP:rs1586807209." evidence="17">
    <original>A</original>
    <variation>V</variation>
    <location>
        <position position="247"/>
    </location>
</feature>
<feature type="sequence variant" id="VAR_067086" description="In CMT2K; recessive form; dbSNP:rs1476856429." evidence="13">
    <original>H</original>
    <variation>R</variation>
    <location>
        <position position="256"/>
    </location>
</feature>
<feature type="sequence variant" id="VAR_017186" description="In CMTRIA; no effect on mitochondrial localization but impairment in the ability to induce mitochondrial fragmentation; dbSNP:rs28937906." evidence="5 6 9 10">
    <original>R</original>
    <variation>C</variation>
    <location>
        <position position="282"/>
    </location>
</feature>
<feature type="sequence variant" id="VAR_067087" description="In CMT2K; recessive form; dbSNP:rs375431837." evidence="13">
    <original>R</original>
    <variation>H</variation>
    <location>
        <position position="282"/>
    </location>
</feature>
<feature type="sequence variant" id="VAR_017187" description="In CMT2RV; Abolishes mitochondrial fission; dbSNP:rs1323153568." evidence="8 10">
    <original>R</original>
    <variation>Q</variation>
    <location>
        <position position="310"/>
    </location>
</feature>
<feature type="sequence variant" id="VAR_078273" description="In CMT2K; recessive form; dbSNP:rs538389475." evidence="17">
    <original>R</original>
    <variation>W</variation>
    <location>
        <position position="310"/>
    </location>
</feature>
<feature type="mutagenesis site" description="Impairment in the ability to induce mitochondrial fragmentation." evidence="10">
    <original>M</original>
    <variation>H</variation>
    <location>
        <position position="116"/>
    </location>
</feature>
<feature type="mutagenesis site" description="No effect on mitochondrial localization." evidence="9">
    <original>T</original>
    <variation>P</variation>
    <location>
        <position position="157"/>
    </location>
</feature>
<feature type="sequence conflict" description="In Ref. 1; CAA76892." evidence="19" ref="1">
    <original>E</original>
    <variation>R</variation>
    <location>
        <position position="3"/>
    </location>
</feature>
<feature type="sequence conflict" description="In Ref. 1; CAA76892." evidence="19" ref="1">
    <original>AE</original>
    <variation>GK</variation>
    <location>
        <begin position="16"/>
        <end position="17"/>
    </location>
</feature>
<feature type="sequence conflict" description="In Ref. 2; BAJ65577." evidence="19" ref="2">
    <original>S</original>
    <variation>C</variation>
    <location>
        <position position="34"/>
    </location>
</feature>
<feature type="sequence conflict" description="In Ref. 1; CAA76892." evidence="19" ref="1">
    <original>E</original>
    <variation>G</variation>
    <location>
        <position position="53"/>
    </location>
</feature>
<feature type="sequence conflict" description="In Ref. 3; BAF85261." evidence="19" ref="3">
    <original>M</original>
    <variation>I</variation>
    <location>
        <position position="133"/>
    </location>
</feature>
<feature type="sequence conflict" description="In Ref. 1; CAA76892." evidence="19" ref="1">
    <original>F</original>
    <variation>L</variation>
    <location>
        <position position="351"/>
    </location>
</feature>
<feature type="strand" evidence="24">
    <location>
        <begin position="26"/>
        <end position="30"/>
    </location>
</feature>
<feature type="helix" evidence="24">
    <location>
        <begin position="35"/>
        <end position="46"/>
    </location>
</feature>
<feature type="strand" evidence="24">
    <location>
        <begin position="52"/>
        <end position="55"/>
    </location>
</feature>
<feature type="helix" evidence="24">
    <location>
        <begin position="67"/>
        <end position="69"/>
    </location>
</feature>
<feature type="turn" evidence="24">
    <location>
        <begin position="71"/>
        <end position="73"/>
    </location>
</feature>
<feature type="strand" evidence="24">
    <location>
        <begin position="79"/>
        <end position="82"/>
    </location>
</feature>
<feature type="strand" evidence="24">
    <location>
        <begin position="85"/>
        <end position="89"/>
    </location>
</feature>
<feature type="helix" evidence="24">
    <location>
        <begin position="90"/>
        <end position="100"/>
    </location>
</feature>
<feature type="strand" evidence="22">
    <location>
        <begin position="104"/>
        <end position="106"/>
    </location>
</feature>
<feature type="helix" evidence="24">
    <location>
        <begin position="118"/>
        <end position="129"/>
    </location>
</feature>
<feature type="helix" evidence="24">
    <location>
        <begin position="133"/>
        <end position="142"/>
    </location>
</feature>
<feature type="helix" evidence="24">
    <location>
        <begin position="144"/>
        <end position="146"/>
    </location>
</feature>
<feature type="helix" evidence="24">
    <location>
        <begin position="154"/>
        <end position="158"/>
    </location>
</feature>
<feature type="helix" evidence="23">
    <location>
        <begin position="178"/>
        <end position="185"/>
    </location>
</feature>
<feature type="helix" evidence="24">
    <location>
        <begin position="187"/>
        <end position="228"/>
    </location>
</feature>
<feature type="strand" evidence="21">
    <location>
        <begin position="232"/>
        <end position="234"/>
    </location>
</feature>
<feature type="strand" evidence="24">
    <location>
        <begin position="239"/>
        <end position="243"/>
    </location>
</feature>
<feature type="helix" evidence="24">
    <location>
        <begin position="246"/>
        <end position="261"/>
    </location>
</feature>
<feature type="turn" evidence="24">
    <location>
        <begin position="265"/>
        <end position="267"/>
    </location>
</feature>
<feature type="helix" evidence="24">
    <location>
        <begin position="274"/>
        <end position="285"/>
    </location>
</feature>
<feature type="helix" evidence="24">
    <location>
        <begin position="287"/>
        <end position="293"/>
    </location>
</feature>
<feature type="turn" evidence="24">
    <location>
        <begin position="294"/>
        <end position="297"/>
    </location>
</feature>
<organism>
    <name type="scientific">Homo sapiens</name>
    <name type="common">Human</name>
    <dbReference type="NCBI Taxonomy" id="9606"/>
    <lineage>
        <taxon>Eukaryota</taxon>
        <taxon>Metazoa</taxon>
        <taxon>Chordata</taxon>
        <taxon>Craniata</taxon>
        <taxon>Vertebrata</taxon>
        <taxon>Euteleostomi</taxon>
        <taxon>Mammalia</taxon>
        <taxon>Eutheria</taxon>
        <taxon>Euarchontoglires</taxon>
        <taxon>Primates</taxon>
        <taxon>Haplorrhini</taxon>
        <taxon>Catarrhini</taxon>
        <taxon>Hominidae</taxon>
        <taxon>Homo</taxon>
    </lineage>
</organism>
<gene>
    <name type="primary">GDAP1</name>
</gene>
<evidence type="ECO:0000250" key="1">
    <source>
        <dbReference type="UniProtKB" id="O88741"/>
    </source>
</evidence>
<evidence type="ECO:0000255" key="2"/>
<evidence type="ECO:0000269" key="3">
    <source>
    </source>
</evidence>
<evidence type="ECO:0000269" key="4">
    <source>
    </source>
</evidence>
<evidence type="ECO:0000269" key="5">
    <source>
    </source>
</evidence>
<evidence type="ECO:0000269" key="6">
    <source>
    </source>
</evidence>
<evidence type="ECO:0000269" key="7">
    <source>
    </source>
</evidence>
<evidence type="ECO:0000269" key="8">
    <source>
    </source>
</evidence>
<evidence type="ECO:0000269" key="9">
    <source>
    </source>
</evidence>
<evidence type="ECO:0000269" key="10">
    <source>
    </source>
</evidence>
<evidence type="ECO:0000269" key="11">
    <source>
    </source>
</evidence>
<evidence type="ECO:0000269" key="12">
    <source>
    </source>
</evidence>
<evidence type="ECO:0000269" key="13">
    <source>
    </source>
</evidence>
<evidence type="ECO:0000269" key="14">
    <source>
    </source>
</evidence>
<evidence type="ECO:0000269" key="15">
    <source>
    </source>
</evidence>
<evidence type="ECO:0000269" key="16">
    <source>
    </source>
</evidence>
<evidence type="ECO:0000269" key="17">
    <source>
    </source>
</evidence>
<evidence type="ECO:0000303" key="18">
    <source>
    </source>
</evidence>
<evidence type="ECO:0000305" key="19"/>
<evidence type="ECO:0007744" key="20">
    <source>
    </source>
</evidence>
<evidence type="ECO:0007829" key="21">
    <source>
        <dbReference type="PDB" id="7Q6J"/>
    </source>
</evidence>
<evidence type="ECO:0007829" key="22">
    <source>
        <dbReference type="PDB" id="7Q6K"/>
    </source>
</evidence>
<evidence type="ECO:0007829" key="23">
    <source>
        <dbReference type="PDB" id="7YWD"/>
    </source>
</evidence>
<evidence type="ECO:0007829" key="24">
    <source>
        <dbReference type="PDB" id="8A4K"/>
    </source>
</evidence>
<accession>Q8TB36</accession>
<accession>A8K957</accession>
<accession>E7FJF3</accession>
<accession>E7FJF4</accession>
<name>GDAP1_HUMAN</name>
<reference key="1">
    <citation type="journal article" date="1999" name="J. Neurochem.">
        <title>Isolation of 10 differentially expressed cDNAs in differentiated Neuro2a cells induced through controlled expression of the GD3 synthase gene.</title>
        <authorList>
            <person name="Liu H."/>
            <person name="Nakagawa T."/>
            <person name="Kanematsu T."/>
            <person name="Uchida T."/>
            <person name="Tsuji S."/>
        </authorList>
    </citation>
    <scope>NUCLEOTIDE SEQUENCE [MRNA] (ISOFORM 1)</scope>
    <source>
        <tissue>Brain</tissue>
    </source>
</reference>
<reference key="2">
    <citation type="journal article" date="2010" name="J. Med. Genet.">
        <title>The GST domain of GDAP1 is a frequent target of mutations in the dominant form of axonal Charcot Marie Tooth type 2K.</title>
        <authorList>
            <person name="Crimella C."/>
            <person name="Tonelli A."/>
            <person name="Airoldi G."/>
            <person name="Baschirotto C."/>
            <person name="D'Angelo M.G."/>
            <person name="Bonato S."/>
            <person name="Losito L."/>
            <person name="Trabacca A."/>
            <person name="Bresolin N."/>
            <person name="Bassi M.T."/>
        </authorList>
    </citation>
    <scope>NUCLEOTIDE SEQUENCE [MRNA]</scope>
    <scope>VARIANT CMT2K SER-226</scope>
    <source>
        <tissue>Blood</tissue>
    </source>
</reference>
<reference key="3">
    <citation type="journal article" date="2004" name="Nat. Genet.">
        <title>Complete sequencing and characterization of 21,243 full-length human cDNAs.</title>
        <authorList>
            <person name="Ota T."/>
            <person name="Suzuki Y."/>
            <person name="Nishikawa T."/>
            <person name="Otsuki T."/>
            <person name="Sugiyama T."/>
            <person name="Irie R."/>
            <person name="Wakamatsu A."/>
            <person name="Hayashi K."/>
            <person name="Sato H."/>
            <person name="Nagai K."/>
            <person name="Kimura K."/>
            <person name="Makita H."/>
            <person name="Sekine M."/>
            <person name="Obayashi M."/>
            <person name="Nishi T."/>
            <person name="Shibahara T."/>
            <person name="Tanaka T."/>
            <person name="Ishii S."/>
            <person name="Yamamoto J."/>
            <person name="Saito K."/>
            <person name="Kawai Y."/>
            <person name="Isono Y."/>
            <person name="Nakamura Y."/>
            <person name="Nagahari K."/>
            <person name="Murakami K."/>
            <person name="Yasuda T."/>
            <person name="Iwayanagi T."/>
            <person name="Wagatsuma M."/>
            <person name="Shiratori A."/>
            <person name="Sudo H."/>
            <person name="Hosoiri T."/>
            <person name="Kaku Y."/>
            <person name="Kodaira H."/>
            <person name="Kondo H."/>
            <person name="Sugawara M."/>
            <person name="Takahashi M."/>
            <person name="Kanda K."/>
            <person name="Yokoi T."/>
            <person name="Furuya T."/>
            <person name="Kikkawa E."/>
            <person name="Omura Y."/>
            <person name="Abe K."/>
            <person name="Kamihara K."/>
            <person name="Katsuta N."/>
            <person name="Sato K."/>
            <person name="Tanikawa M."/>
            <person name="Yamazaki M."/>
            <person name="Ninomiya K."/>
            <person name="Ishibashi T."/>
            <person name="Yamashita H."/>
            <person name="Murakawa K."/>
            <person name="Fujimori K."/>
            <person name="Tanai H."/>
            <person name="Kimata M."/>
            <person name="Watanabe M."/>
            <person name="Hiraoka S."/>
            <person name="Chiba Y."/>
            <person name="Ishida S."/>
            <person name="Ono Y."/>
            <person name="Takiguchi S."/>
            <person name="Watanabe S."/>
            <person name="Yosida M."/>
            <person name="Hotuta T."/>
            <person name="Kusano J."/>
            <person name="Kanehori K."/>
            <person name="Takahashi-Fujii A."/>
            <person name="Hara H."/>
            <person name="Tanase T.-O."/>
            <person name="Nomura Y."/>
            <person name="Togiya S."/>
            <person name="Komai F."/>
            <person name="Hara R."/>
            <person name="Takeuchi K."/>
            <person name="Arita M."/>
            <person name="Imose N."/>
            <person name="Musashino K."/>
            <person name="Yuuki H."/>
            <person name="Oshima A."/>
            <person name="Sasaki N."/>
            <person name="Aotsuka S."/>
            <person name="Yoshikawa Y."/>
            <person name="Matsunawa H."/>
            <person name="Ichihara T."/>
            <person name="Shiohata N."/>
            <person name="Sano S."/>
            <person name="Moriya S."/>
            <person name="Momiyama H."/>
            <person name="Satoh N."/>
            <person name="Takami S."/>
            <person name="Terashima Y."/>
            <person name="Suzuki O."/>
            <person name="Nakagawa S."/>
            <person name="Senoh A."/>
            <person name="Mizoguchi H."/>
            <person name="Goto Y."/>
            <person name="Shimizu F."/>
            <person name="Wakebe H."/>
            <person name="Hishigaki H."/>
            <person name="Watanabe T."/>
            <person name="Sugiyama A."/>
            <person name="Takemoto M."/>
            <person name="Kawakami B."/>
            <person name="Yamazaki M."/>
            <person name="Watanabe K."/>
            <person name="Kumagai A."/>
            <person name="Itakura S."/>
            <person name="Fukuzumi Y."/>
            <person name="Fujimori Y."/>
            <person name="Komiyama M."/>
            <person name="Tashiro H."/>
            <person name="Tanigami A."/>
            <person name="Fujiwara T."/>
            <person name="Ono T."/>
            <person name="Yamada K."/>
            <person name="Fujii Y."/>
            <person name="Ozaki K."/>
            <person name="Hirao M."/>
            <person name="Ohmori Y."/>
            <person name="Kawabata A."/>
            <person name="Hikiji T."/>
            <person name="Kobatake N."/>
            <person name="Inagaki H."/>
            <person name="Ikema Y."/>
            <person name="Okamoto S."/>
            <person name="Okitani R."/>
            <person name="Kawakami T."/>
            <person name="Noguchi S."/>
            <person name="Itoh T."/>
            <person name="Shigeta K."/>
            <person name="Senba T."/>
            <person name="Matsumura K."/>
            <person name="Nakajima Y."/>
            <person name="Mizuno T."/>
            <person name="Morinaga M."/>
            <person name="Sasaki M."/>
            <person name="Togashi T."/>
            <person name="Oyama M."/>
            <person name="Hata H."/>
            <person name="Watanabe M."/>
            <person name="Komatsu T."/>
            <person name="Mizushima-Sugano J."/>
            <person name="Satoh T."/>
            <person name="Shirai Y."/>
            <person name="Takahashi Y."/>
            <person name="Nakagawa K."/>
            <person name="Okumura K."/>
            <person name="Nagase T."/>
            <person name="Nomura N."/>
            <person name="Kikuchi H."/>
            <person name="Masuho Y."/>
            <person name="Yamashita R."/>
            <person name="Nakai K."/>
            <person name="Yada T."/>
            <person name="Nakamura Y."/>
            <person name="Ohara O."/>
            <person name="Isogai T."/>
            <person name="Sugano S."/>
        </authorList>
    </citation>
    <scope>NUCLEOTIDE SEQUENCE [LARGE SCALE MRNA]</scope>
    <source>
        <tissue>Testis</tissue>
    </source>
</reference>
<reference key="4">
    <citation type="journal article" date="2006" name="Nature">
        <title>DNA sequence and analysis of human chromosome 8.</title>
        <authorList>
            <person name="Nusbaum C."/>
            <person name="Mikkelsen T.S."/>
            <person name="Zody M.C."/>
            <person name="Asakawa S."/>
            <person name="Taudien S."/>
            <person name="Garber M."/>
            <person name="Kodira C.D."/>
            <person name="Schueler M.G."/>
            <person name="Shimizu A."/>
            <person name="Whittaker C.A."/>
            <person name="Chang J.L."/>
            <person name="Cuomo C.A."/>
            <person name="Dewar K."/>
            <person name="FitzGerald M.G."/>
            <person name="Yang X."/>
            <person name="Allen N.R."/>
            <person name="Anderson S."/>
            <person name="Asakawa T."/>
            <person name="Blechschmidt K."/>
            <person name="Bloom T."/>
            <person name="Borowsky M.L."/>
            <person name="Butler J."/>
            <person name="Cook A."/>
            <person name="Corum B."/>
            <person name="DeArellano K."/>
            <person name="DeCaprio D."/>
            <person name="Dooley K.T."/>
            <person name="Dorris L. III"/>
            <person name="Engels R."/>
            <person name="Gloeckner G."/>
            <person name="Hafez N."/>
            <person name="Hagopian D.S."/>
            <person name="Hall J.L."/>
            <person name="Ishikawa S.K."/>
            <person name="Jaffe D.B."/>
            <person name="Kamat A."/>
            <person name="Kudoh J."/>
            <person name="Lehmann R."/>
            <person name="Lokitsang T."/>
            <person name="Macdonald P."/>
            <person name="Major J.E."/>
            <person name="Matthews C.D."/>
            <person name="Mauceli E."/>
            <person name="Menzel U."/>
            <person name="Mihalev A.H."/>
            <person name="Minoshima S."/>
            <person name="Murayama Y."/>
            <person name="Naylor J.W."/>
            <person name="Nicol R."/>
            <person name="Nguyen C."/>
            <person name="O'Leary S.B."/>
            <person name="O'Neill K."/>
            <person name="Parker S.C.J."/>
            <person name="Polley A."/>
            <person name="Raymond C.K."/>
            <person name="Reichwald K."/>
            <person name="Rodriguez J."/>
            <person name="Sasaki T."/>
            <person name="Schilhabel M."/>
            <person name="Siddiqui R."/>
            <person name="Smith C.L."/>
            <person name="Sneddon T.P."/>
            <person name="Talamas J.A."/>
            <person name="Tenzin P."/>
            <person name="Topham K."/>
            <person name="Venkataraman V."/>
            <person name="Wen G."/>
            <person name="Yamazaki S."/>
            <person name="Young S.K."/>
            <person name="Zeng Q."/>
            <person name="Zimmer A.R."/>
            <person name="Rosenthal A."/>
            <person name="Birren B.W."/>
            <person name="Platzer M."/>
            <person name="Shimizu N."/>
            <person name="Lander E.S."/>
        </authorList>
    </citation>
    <scope>NUCLEOTIDE SEQUENCE [LARGE SCALE GENOMIC DNA]</scope>
</reference>
<reference key="5">
    <citation type="journal article" date="2004" name="Genome Res.">
        <title>The status, quality, and expansion of the NIH full-length cDNA project: the Mammalian Gene Collection (MGC).</title>
        <authorList>
            <consortium name="The MGC Project Team"/>
        </authorList>
    </citation>
    <scope>NUCLEOTIDE SEQUENCE [LARGE SCALE MRNA] (ISOFORM 2)</scope>
    <source>
        <tissue>Melanoma</tissue>
    </source>
</reference>
<reference key="6">
    <citation type="journal article" date="2002" name="Nat. Genet.">
        <title>The gene encoding ganglioside-induced differentiation-associated protein 1 is mutated in axonal Charcot-Marie-Tooth type 4A disease.</title>
        <authorList>
            <person name="Cuesta A."/>
            <person name="Pedrola L."/>
            <person name="Sevilla T."/>
            <person name="Garcia-Planells J."/>
            <person name="Chumillas M.J."/>
            <person name="Mayordomo F."/>
            <person name="LeGuern E."/>
            <person name="Marin I."/>
            <person name="Vilchez J.J."/>
            <person name="Palau F."/>
        </authorList>
    </citation>
    <scope>DISEASE</scope>
    <scope>TISSUE SPECIFICITY</scope>
</reference>
<reference key="7">
    <citation type="journal article" date="2005" name="Hum. Mol. Genet.">
        <title>GDAP1, the protein causing Charcot-Marie-Tooth disease type 4A, is expressed in neurons and is associated with mitochondria.</title>
        <authorList>
            <person name="Pedrola L."/>
            <person name="Espert A."/>
            <person name="Wu X."/>
            <person name="Claramunt R."/>
            <person name="Shy M.E."/>
            <person name="Palau F."/>
        </authorList>
    </citation>
    <scope>SUBCELLULAR LOCATION</scope>
    <scope>MUTAGENESIS OF THR-157</scope>
    <scope>CHARACTERIZATION OF VARIANTS CMT4A GLN-120 AND HIS-161</scope>
    <scope>CHARACTERIZATION OF VARIANT CMTRIA CYS-282</scope>
    <scope>CHARACTERIZATION OF VARIANT CMT2K TRP-120</scope>
</reference>
<reference key="8">
    <citation type="journal article" date="2005" name="J. Cell Biol.">
        <title>Ganglioside-induced differentiation associated protein 1 is a regulator of the mitochondrial network: new implications for Charcot-Marie-Tooth disease.</title>
        <authorList>
            <person name="Niemann A."/>
            <person name="Ruegg M."/>
            <person name="La Padula V."/>
            <person name="Schenone A."/>
            <person name="Suter U."/>
        </authorList>
    </citation>
    <scope>TISSUE SPECIFICITY</scope>
    <scope>SUBCELLULAR LOCATION</scope>
    <scope>TOPOLOGY</scope>
    <scope>FUNCTION</scope>
    <scope>MUTAGENESIS OF MET-116</scope>
    <scope>CHARACTERIZATION OF VARIANTS CMT4A GLN-120 AND HIS-161</scope>
    <scope>CHARACTERIZATION OF VARIANT CMT2RV GLN-310</scope>
    <scope>CHARACTERIZATION OF VARIANT CMTRIA CYS-282</scope>
</reference>
<reference key="9">
    <citation type="journal article" date="2006" name="Biochem. Biophys. Res. Commun.">
        <title>Functional characterisation of ganglioside-induced differentiation-associated protein 1 as a glutathione transferase.</title>
        <authorList>
            <person name="Shield A.J."/>
            <person name="Murray T.P."/>
            <person name="Board P.G."/>
        </authorList>
    </citation>
    <scope>SUBUNIT</scope>
    <scope>SUBCELLULAR LOCATION</scope>
    <scope>LACK OF GLUTATHIONE TRANSFERASE ACTIVITY</scope>
</reference>
<reference key="10">
    <citation type="journal article" date="2009" name="Science">
        <title>Lysine acetylation targets protein complexes and co-regulates major cellular functions.</title>
        <authorList>
            <person name="Choudhary C."/>
            <person name="Kumar C."/>
            <person name="Gnad F."/>
            <person name="Nielsen M.L."/>
            <person name="Rehman M."/>
            <person name="Walther T.C."/>
            <person name="Olsen J.V."/>
            <person name="Mann M."/>
        </authorList>
    </citation>
    <scope>ACETYLATION [LARGE SCALE ANALYSIS] AT LYS-203</scope>
    <scope>IDENTIFICATION BY MASS SPECTROMETRY [LARGE SCALE ANALYSIS]</scope>
</reference>
<reference key="11">
    <citation type="journal article" date="2015" name="Nat. Cell Biol.">
        <title>USP30 and parkin homeostatically regulate atypical ubiquitin chains on mitochondria.</title>
        <authorList>
            <person name="Cunningham C.N."/>
            <person name="Baughman J.M."/>
            <person name="Phu L."/>
            <person name="Tea J.S."/>
            <person name="Yu C."/>
            <person name="Coons M."/>
            <person name="Kirkpatrick D.S."/>
            <person name="Bingol B."/>
            <person name="Corn J.E."/>
        </authorList>
    </citation>
    <scope>UBIQUITINATION AT LYS-50; LYS-172; LYS-173; LYS-188; LYS-190; LYS-203; LYS-206; LYS-207- AND LYS-214</scope>
</reference>
<reference key="12">
    <citation type="journal article" date="2002" name="Nat. Genet.">
        <title>Ganglioside-induced differentiation-associated protein-1 is mutant in Charcot-Marie-Tooth disease type 4A/8q21.</title>
        <authorList>
            <person name="Baxter R.V."/>
            <person name="Ben-Othmane K."/>
            <person name="Rochelle J.M."/>
            <person name="Stajich J.E."/>
            <person name="Hulette C."/>
            <person name="Dew-Knight S."/>
            <person name="Hentati F."/>
            <person name="Ben-Hamida M."/>
            <person name="Bel S."/>
            <person name="Stenger J.E."/>
            <person name="Gilbert J.R."/>
            <person name="Pericak-Vance M.A."/>
            <person name="Vance J.M."/>
        </authorList>
    </citation>
    <scope>VARIANT CMT4A HIS-161</scope>
</reference>
<reference key="13">
    <citation type="journal article" date="2002" name="Neurology">
        <title>Mutations in GDAP1: autosomal recessive CMT with demyelination and axonopathy.</title>
        <authorList>
            <person name="Nelis E."/>
            <person name="Erdem S."/>
            <person name="Van Den Bergh P.Y.K."/>
            <person name="Belpaire-Dethiou M.-C."/>
            <person name="Ceuterick C."/>
            <person name="Van Gerwen V."/>
            <person name="Cuesta A."/>
            <person name="Pedrola L."/>
            <person name="Palau F."/>
            <person name="Gabreels-Festen A.A.W.M."/>
            <person name="Verellen C."/>
            <person name="Tan E."/>
            <person name="Demirci M."/>
            <person name="Van Broeckhoven C."/>
            <person name="De Jonghe P."/>
            <person name="Topaloglu H."/>
            <person name="Timmerman V."/>
        </authorList>
    </citation>
    <scope>INVOLVEMENT IN CMTRIA</scope>
    <scope>VARIANT CMTRIA CYS-282</scope>
</reference>
<reference key="14">
    <citation type="journal article" date="2003" name="Neuromuscul. Disord.">
        <title>Variability of disease progression in a family with autosomal recessive CMT associated with a S194X and new R310Q mutation in the GDAP1 gene.</title>
        <authorList>
            <person name="Azzedine H."/>
            <person name="Ruberg M."/>
            <person name="Ente D."/>
            <person name="Gilardeau C."/>
            <person name="Perie S."/>
            <person name="Wechsler B."/>
            <person name="Brice A."/>
            <person name="LeGuern E."/>
            <person name="Dubourg O."/>
        </authorList>
    </citation>
    <scope>VARIANT CMT2RV GLN-310</scope>
</reference>
<reference key="15">
    <citation type="journal article" date="2003" name="Ann. Neurol.">
        <title>CMT4A: identification of a Hispanic GDAP1 founder mutation.</title>
        <authorList>
            <person name="Boerkoel C.F."/>
            <person name="Takashima H."/>
            <person name="Nakagawa M."/>
            <person name="Izumo S."/>
            <person name="Armstrong D."/>
            <person name="Butler I."/>
            <person name="Mancias P."/>
            <person name="Papasozomenos S.C.H."/>
            <person name="Stern L.Z."/>
            <person name="Lupski J.R."/>
        </authorList>
    </citation>
    <scope>VARIANT CMT4A GLN-120</scope>
</reference>
<reference key="16">
    <citation type="journal article" date="2003" name="Brain">
        <title>Mutations in the ganglioside-induced differentiation-associated protein-1 (GDAP1) gene in intermediate type autosomal recessive Charcot-Marie-Tooth neuropathy.</title>
        <authorList>
            <person name="Senderek J."/>
            <person name="Bergmann C."/>
            <person name="Ramaekers V.T."/>
            <person name="Nelis E."/>
            <person name="Bernert G."/>
            <person name="Makowski A."/>
            <person name="Zuechner S."/>
            <person name="De Jonghe P."/>
            <person name="Rudnik-Schoeneborn S."/>
            <person name="Zerres K."/>
            <person name="Schroeder J.M."/>
        </authorList>
    </citation>
    <scope>INVOLVEMENT IN CMTRIA</scope>
</reference>
<reference key="17">
    <citation type="journal article" date="2011" name="PLoS ONE">
        <title>The mutational spectrum in a cohort of Charcot-Marie-Tooth disease type 2 among the Han Chinese in Taiwan.</title>
        <authorList>
            <person name="Lin K.P."/>
            <person name="Soong B.W."/>
            <person name="Yang C.C."/>
            <person name="Huang L.W."/>
            <person name="Chang M.H."/>
            <person name="Lee I.H."/>
            <person name="Antonellis A."/>
            <person name="Lee Y.C."/>
        </authorList>
    </citation>
    <scope>VARIANTS CMT2K ARG-256 AND HIS-282</scope>
</reference>
<reference key="18">
    <citation type="journal article" date="2014" name="J. Neurol.">
        <title>Whole-exome sequencing in patients with inherited neuropathies: outcome and challenges.</title>
        <authorList>
            <person name="Schabhuettl M."/>
            <person name="Wieland T."/>
            <person name="Senderek J."/>
            <person name="Baets J."/>
            <person name="Timmerman V."/>
            <person name="De Jonghe P."/>
            <person name="Reilly M.M."/>
            <person name="Stieglbauer K."/>
            <person name="Laich E."/>
            <person name="Windhager R."/>
            <person name="Erwa W."/>
            <person name="Trajanoski S."/>
            <person name="Strom T.M."/>
            <person name="Auer-Grumbach M."/>
        </authorList>
    </citation>
    <scope>VARIANT ASN-39</scope>
</reference>
<reference key="19">
    <citation type="journal article" date="2016" name="Neuromuscul. Disord.">
        <title>GDAP1 mutations in Italian axonal Charcot-Marie-Tooth patients: Phenotypic features and clinical course.</title>
        <authorList>
            <person name="Pezzini I."/>
            <person name="Geroldi A."/>
            <person name="Capponi S."/>
            <person name="Gulli R."/>
            <person name="Schenone A."/>
            <person name="Grandis M."/>
            <person name="Doria-Lamba L."/>
            <person name="La Piana C."/>
            <person name="Cremonte M."/>
            <person name="Pisciotta C."/>
            <person name="Nolano M."/>
            <person name="Manganelli F."/>
            <person name="Santoro L."/>
            <person name="Mandich P."/>
            <person name="Bellone E."/>
        </authorList>
    </citation>
    <scope>VARIANTS CMT2K GLY-120; TRP-120; ARG-123; GLU-218 AND SER-226</scope>
</reference>
<reference key="20">
    <citation type="journal article" date="2017" name="Clin. Genet.">
        <title>Clinical and mutational spectrum of Japanese patients with Charcot-Marie-Tooth disease caused by GDAP1 variants.</title>
        <authorList>
            <person name="Yoshimura A."/>
            <person name="Yuan J.H."/>
            <person name="Hashiguchi A."/>
            <person name="Hiramatsu Y."/>
            <person name="Ando M."/>
            <person name="Higuchi Y."/>
            <person name="Nakamura T."/>
            <person name="Okamoto Y."/>
            <person name="Matsumura K."/>
            <person name="Hamano T."/>
            <person name="Sawaura N."/>
            <person name="Shimatani Y."/>
            <person name="Kumada S."/>
            <person name="Okumura Y."/>
            <person name="Miyahara J."/>
            <person name="Yamaguchi Y."/>
            <person name="Kitamura S."/>
            <person name="Haginoya K."/>
            <person name="Mitsui J."/>
            <person name="Ishiura H."/>
            <person name="Tsuji S."/>
            <person name="Takashima H."/>
        </authorList>
    </citation>
    <scope>VARIANTS CMT2K TRP-120; ARG-123; LYS-126; GLY-156; VAL-247 AND TRP-310</scope>
</reference>
<keyword id="KW-0002">3D-structure</keyword>
<keyword id="KW-0007">Acetylation</keyword>
<keyword id="KW-0025">Alternative splicing</keyword>
<keyword id="KW-0144">Charcot-Marie-Tooth disease</keyword>
<keyword id="KW-0175">Coiled coil</keyword>
<keyword id="KW-0963">Cytoplasm</keyword>
<keyword id="KW-0225">Disease variant</keyword>
<keyword id="KW-1017">Isopeptide bond</keyword>
<keyword id="KW-0472">Membrane</keyword>
<keyword id="KW-0496">Mitochondrion</keyword>
<keyword id="KW-1000">Mitochondrion outer membrane</keyword>
<keyword id="KW-0523">Neurodegeneration</keyword>
<keyword id="KW-0622">Neuropathy</keyword>
<keyword id="KW-1267">Proteomics identification</keyword>
<keyword id="KW-1185">Reference proteome</keyword>
<keyword id="KW-0812">Transmembrane</keyword>
<keyword id="KW-1133">Transmembrane helix</keyword>
<keyword id="KW-0832">Ubl conjugation</keyword>
<sequence>MAERQEEQRGSPPLRAEGKADAEVKLILYHWTHSFSSQKVRLVIAEKALKCEEHDVSLPLSEHNEPWFMRLNSTGEVPVLIHGENIICEATQIIDYLEQTFLDERTPRLMPDKESMYYPRVQHYRELLDSLPMDAYTHGCILHPELTVDSMIPAYATTRIRSQIGNTESELKKLAEENPDLQEAYIAKQKRLKSKLLDHDNVKYLKKILDELEKVLDQVETELQRRNEETPEEGQQPWLCGESFTLADVSLAVTLHRLKFLGFARRNWGNGKRPNLETYYERVLKRKTFNKVLGHVNNILISAVLPTAFRVAKKRAPKVLGTTLVVGLLAGVGYFAFMLFRKRLGSMILAFRPRPNYF</sequence>